<proteinExistence type="inferred from homology"/>
<gene>
    <name evidence="1" type="primary">uvrC</name>
    <name type="ordered locus">FN1090</name>
</gene>
<comment type="function">
    <text evidence="1">The UvrABC repair system catalyzes the recognition and processing of DNA lesions. UvrC both incises the 5' and 3' sides of the lesion. The N-terminal half is responsible for the 3' incision and the C-terminal half is responsible for the 5' incision.</text>
</comment>
<comment type="subunit">
    <text evidence="1">Interacts with UvrB in an incision complex.</text>
</comment>
<comment type="subcellular location">
    <subcellularLocation>
        <location evidence="1">Cytoplasm</location>
    </subcellularLocation>
</comment>
<comment type="similarity">
    <text evidence="1">Belongs to the UvrC family.</text>
</comment>
<keyword id="KW-0963">Cytoplasm</keyword>
<keyword id="KW-0227">DNA damage</keyword>
<keyword id="KW-0228">DNA excision</keyword>
<keyword id="KW-0234">DNA repair</keyword>
<keyword id="KW-0267">Excision nuclease</keyword>
<keyword id="KW-1185">Reference proteome</keyword>
<keyword id="KW-0742">SOS response</keyword>
<protein>
    <recommendedName>
        <fullName evidence="1">UvrABC system protein C</fullName>
        <shortName evidence="1">Protein UvrC</shortName>
    </recommendedName>
    <alternativeName>
        <fullName evidence="1">Excinuclease ABC subunit C</fullName>
    </alternativeName>
</protein>
<organism>
    <name type="scientific">Fusobacterium nucleatum subsp. nucleatum (strain ATCC 25586 / DSM 15643 / BCRC 10681 / CIP 101130 / JCM 8532 / KCTC 2640 / LMG 13131 / VPI 4355)</name>
    <dbReference type="NCBI Taxonomy" id="190304"/>
    <lineage>
        <taxon>Bacteria</taxon>
        <taxon>Fusobacteriati</taxon>
        <taxon>Fusobacteriota</taxon>
        <taxon>Fusobacteriia</taxon>
        <taxon>Fusobacteriales</taxon>
        <taxon>Fusobacteriaceae</taxon>
        <taxon>Fusobacterium</taxon>
    </lineage>
</organism>
<feature type="chain" id="PRO_0000227431" description="UvrABC system protein C">
    <location>
        <begin position="1"/>
        <end position="589"/>
    </location>
</feature>
<feature type="domain" description="GIY-YIG" evidence="1">
    <location>
        <begin position="10"/>
        <end position="87"/>
    </location>
</feature>
<feature type="domain" description="UVR" evidence="1">
    <location>
        <begin position="197"/>
        <end position="232"/>
    </location>
</feature>
<sequence length="589" mass="68599">MDIGKIDIPESSGVYLMKKNNKVIYVGKAKNLKNRVSSYFNRVHESEKTNELVKNIEDIEFFLTNTEIDALLLENNLIKKYSPKYNILLKDEKTYPFIKISKEDFSSIKIVRTTKALDIKSGEYFGPYPYGAWRLKNILMKLFKIRDCNRDMKKTSPRPCLKYYMKSCTGPCVYKDIKEEYNKDVENLKQVLKGNTSKLINELTALMNKASQDMDFEKSIIYREQIKELKSIASSQIIQYERELDEDIFVFKTILDKAFICVLNMRDGKILGKSSTSIDLKNKITDNIYEAIFMSYYSKHILPKSLVLDAEYENELSVVVKALTIEDSKKKEFHFPKIKSRRKELLDMAYKNLERDIESYFSKKDTIEKGIKDLHDILGLKRFPRKIECFDISNIQGKDAVASMSVSIEGRAARKEYRKFKIRCKDTPDDFSMMREVIERRYSKLPDIEFPDVILIDGGLGQINSAGEVLKRLGKIHLSELLSLAERNEEIYKYGESIPYVLSKDMEALKIFQRVRDEAHRFGITYHRKIRSKRIISSELDKIDGIGEVRRRKLLTKFGSISAIKKASIEELKEIIPEKVALEIKNKIR</sequence>
<dbReference type="EMBL" id="AE009951">
    <property type="protein sequence ID" value="AAL95286.1"/>
    <property type="molecule type" value="Genomic_DNA"/>
</dbReference>
<dbReference type="RefSeq" id="NP_603987.1">
    <property type="nucleotide sequence ID" value="NC_003454.1"/>
</dbReference>
<dbReference type="RefSeq" id="WP_005902903.1">
    <property type="nucleotide sequence ID" value="NZ_CP084110.1"/>
</dbReference>
<dbReference type="SMR" id="Q8REL0"/>
<dbReference type="FunCoup" id="Q8REL0">
    <property type="interactions" value="269"/>
</dbReference>
<dbReference type="STRING" id="190304.FN1090"/>
<dbReference type="PaxDb" id="190304-FN1090"/>
<dbReference type="EnsemblBacteria" id="AAL95286">
    <property type="protein sequence ID" value="AAL95286"/>
    <property type="gene ID" value="FN1090"/>
</dbReference>
<dbReference type="GeneID" id="79784071"/>
<dbReference type="KEGG" id="fnu:FN1090"/>
<dbReference type="PATRIC" id="fig|190304.8.peg.1655"/>
<dbReference type="eggNOG" id="COG0322">
    <property type="taxonomic scope" value="Bacteria"/>
</dbReference>
<dbReference type="HOGENOM" id="CLU_014841_3_2_0"/>
<dbReference type="InParanoid" id="Q8REL0"/>
<dbReference type="BioCyc" id="FNUC190304:G1FZS-1671-MONOMER"/>
<dbReference type="Proteomes" id="UP000002521">
    <property type="component" value="Chromosome"/>
</dbReference>
<dbReference type="GO" id="GO:0005737">
    <property type="term" value="C:cytoplasm"/>
    <property type="evidence" value="ECO:0007669"/>
    <property type="project" value="UniProtKB-SubCell"/>
</dbReference>
<dbReference type="GO" id="GO:0009380">
    <property type="term" value="C:excinuclease repair complex"/>
    <property type="evidence" value="ECO:0000318"/>
    <property type="project" value="GO_Central"/>
</dbReference>
<dbReference type="GO" id="GO:0003677">
    <property type="term" value="F:DNA binding"/>
    <property type="evidence" value="ECO:0007669"/>
    <property type="project" value="UniProtKB-UniRule"/>
</dbReference>
<dbReference type="GO" id="GO:0009381">
    <property type="term" value="F:excinuclease ABC activity"/>
    <property type="evidence" value="ECO:0007669"/>
    <property type="project" value="UniProtKB-UniRule"/>
</dbReference>
<dbReference type="GO" id="GO:0006974">
    <property type="term" value="P:DNA damage response"/>
    <property type="evidence" value="ECO:0000318"/>
    <property type="project" value="GO_Central"/>
</dbReference>
<dbReference type="GO" id="GO:0006289">
    <property type="term" value="P:nucleotide-excision repair"/>
    <property type="evidence" value="ECO:0007669"/>
    <property type="project" value="UniProtKB-UniRule"/>
</dbReference>
<dbReference type="GO" id="GO:0009432">
    <property type="term" value="P:SOS response"/>
    <property type="evidence" value="ECO:0007669"/>
    <property type="project" value="UniProtKB-UniRule"/>
</dbReference>
<dbReference type="CDD" id="cd10434">
    <property type="entry name" value="GIY-YIG_UvrC_Cho"/>
    <property type="match status" value="1"/>
</dbReference>
<dbReference type="FunFam" id="3.40.1440.10:FF:000001">
    <property type="entry name" value="UvrABC system protein C"/>
    <property type="match status" value="1"/>
</dbReference>
<dbReference type="Gene3D" id="1.10.150.20">
    <property type="entry name" value="5' to 3' exonuclease, C-terminal subdomain"/>
    <property type="match status" value="1"/>
</dbReference>
<dbReference type="Gene3D" id="3.40.1440.10">
    <property type="entry name" value="GIY-YIG endonuclease"/>
    <property type="match status" value="1"/>
</dbReference>
<dbReference type="Gene3D" id="4.10.860.10">
    <property type="entry name" value="UVR domain"/>
    <property type="match status" value="1"/>
</dbReference>
<dbReference type="Gene3D" id="3.30.420.340">
    <property type="entry name" value="UvrC, RNAse H endonuclease domain"/>
    <property type="match status" value="1"/>
</dbReference>
<dbReference type="HAMAP" id="MF_00203">
    <property type="entry name" value="UvrC"/>
    <property type="match status" value="1"/>
</dbReference>
<dbReference type="InterPro" id="IPR000305">
    <property type="entry name" value="GIY-YIG_endonuc"/>
</dbReference>
<dbReference type="InterPro" id="IPR035901">
    <property type="entry name" value="GIY-YIG_endonuc_sf"/>
</dbReference>
<dbReference type="InterPro" id="IPR047296">
    <property type="entry name" value="GIY-YIG_UvrC_Cho"/>
</dbReference>
<dbReference type="InterPro" id="IPR010994">
    <property type="entry name" value="RuvA_2-like"/>
</dbReference>
<dbReference type="InterPro" id="IPR001943">
    <property type="entry name" value="UVR_dom"/>
</dbReference>
<dbReference type="InterPro" id="IPR036876">
    <property type="entry name" value="UVR_dom_sf"/>
</dbReference>
<dbReference type="InterPro" id="IPR050066">
    <property type="entry name" value="UvrABC_protein_C"/>
</dbReference>
<dbReference type="InterPro" id="IPR004791">
    <property type="entry name" value="UvrC"/>
</dbReference>
<dbReference type="InterPro" id="IPR001162">
    <property type="entry name" value="UvrC_RNase_H_dom"/>
</dbReference>
<dbReference type="InterPro" id="IPR038476">
    <property type="entry name" value="UvrC_RNase_H_dom_sf"/>
</dbReference>
<dbReference type="NCBIfam" id="TIGR00194">
    <property type="entry name" value="uvrC"/>
    <property type="match status" value="1"/>
</dbReference>
<dbReference type="PANTHER" id="PTHR30562:SF1">
    <property type="entry name" value="UVRABC SYSTEM PROTEIN C"/>
    <property type="match status" value="1"/>
</dbReference>
<dbReference type="PANTHER" id="PTHR30562">
    <property type="entry name" value="UVRC/OXIDOREDUCTASE"/>
    <property type="match status" value="1"/>
</dbReference>
<dbReference type="Pfam" id="PF01541">
    <property type="entry name" value="GIY-YIG"/>
    <property type="match status" value="1"/>
</dbReference>
<dbReference type="Pfam" id="PF14520">
    <property type="entry name" value="HHH_5"/>
    <property type="match status" value="1"/>
</dbReference>
<dbReference type="Pfam" id="PF02151">
    <property type="entry name" value="UVR"/>
    <property type="match status" value="1"/>
</dbReference>
<dbReference type="Pfam" id="PF22920">
    <property type="entry name" value="UvrC_RNaseH"/>
    <property type="match status" value="1"/>
</dbReference>
<dbReference type="Pfam" id="PF08459">
    <property type="entry name" value="UvrC_RNaseH_dom"/>
    <property type="match status" value="1"/>
</dbReference>
<dbReference type="SMART" id="SM00465">
    <property type="entry name" value="GIYc"/>
    <property type="match status" value="1"/>
</dbReference>
<dbReference type="SUPFAM" id="SSF46600">
    <property type="entry name" value="C-terminal UvrC-binding domain of UvrB"/>
    <property type="match status" value="1"/>
</dbReference>
<dbReference type="SUPFAM" id="SSF82771">
    <property type="entry name" value="GIY-YIG endonuclease"/>
    <property type="match status" value="1"/>
</dbReference>
<dbReference type="SUPFAM" id="SSF47781">
    <property type="entry name" value="RuvA domain 2-like"/>
    <property type="match status" value="1"/>
</dbReference>
<dbReference type="PROSITE" id="PS50164">
    <property type="entry name" value="GIY_YIG"/>
    <property type="match status" value="1"/>
</dbReference>
<dbReference type="PROSITE" id="PS50151">
    <property type="entry name" value="UVR"/>
    <property type="match status" value="1"/>
</dbReference>
<dbReference type="PROSITE" id="PS50165">
    <property type="entry name" value="UVRC"/>
    <property type="match status" value="1"/>
</dbReference>
<reference key="1">
    <citation type="journal article" date="2002" name="J. Bacteriol.">
        <title>Genome sequence and analysis of the oral bacterium Fusobacterium nucleatum strain ATCC 25586.</title>
        <authorList>
            <person name="Kapatral V."/>
            <person name="Anderson I."/>
            <person name="Ivanova N."/>
            <person name="Reznik G."/>
            <person name="Los T."/>
            <person name="Lykidis A."/>
            <person name="Bhattacharyya A."/>
            <person name="Bartman A."/>
            <person name="Gardner W."/>
            <person name="Grechkin G."/>
            <person name="Zhu L."/>
            <person name="Vasieva O."/>
            <person name="Chu L."/>
            <person name="Kogan Y."/>
            <person name="Chaga O."/>
            <person name="Goltsman E."/>
            <person name="Bernal A."/>
            <person name="Larsen N."/>
            <person name="D'Souza M."/>
            <person name="Walunas T."/>
            <person name="Pusch G."/>
            <person name="Haselkorn R."/>
            <person name="Fonstein M."/>
            <person name="Kyrpides N.C."/>
            <person name="Overbeek R."/>
        </authorList>
    </citation>
    <scope>NUCLEOTIDE SEQUENCE [LARGE SCALE GENOMIC DNA]</scope>
    <source>
        <strain>ATCC 25586 / DSM 15643 / BCRC 10681 / CIP 101130 / JCM 8532 / KCTC 2640 / LMG 13131 / VPI 4355</strain>
    </source>
</reference>
<name>UVRC_FUSNN</name>
<evidence type="ECO:0000255" key="1">
    <source>
        <dbReference type="HAMAP-Rule" id="MF_00203"/>
    </source>
</evidence>
<accession>Q8REL0</accession>